<evidence type="ECO:0000255" key="1"/>
<evidence type="ECO:0000305" key="2"/>
<gene>
    <name type="ordered locus">Rv2076c</name>
    <name type="ORF">MTCY49.15c</name>
</gene>
<name>Y2076_MYCTU</name>
<sequence length="83" mass="9077">MVVCLIGGVAGSLWPRPAGRLRGGCYFAFMGVAWVLLAISAIANAVKGSLWWDIWSLGLLVLIPAVVYGKMRRSRRISSDQDR</sequence>
<organism>
    <name type="scientific">Mycobacterium tuberculosis (strain ATCC 25618 / H37Rv)</name>
    <dbReference type="NCBI Taxonomy" id="83332"/>
    <lineage>
        <taxon>Bacteria</taxon>
        <taxon>Bacillati</taxon>
        <taxon>Actinomycetota</taxon>
        <taxon>Actinomycetes</taxon>
        <taxon>Mycobacteriales</taxon>
        <taxon>Mycobacteriaceae</taxon>
        <taxon>Mycobacterium</taxon>
        <taxon>Mycobacterium tuberculosis complex</taxon>
    </lineage>
</organism>
<proteinExistence type="predicted"/>
<dbReference type="EMBL" id="AL123456">
    <property type="protein sequence ID" value="CCP44850.1"/>
    <property type="molecule type" value="Genomic_DNA"/>
</dbReference>
<dbReference type="PIR" id="G70765">
    <property type="entry name" value="G70765"/>
</dbReference>
<dbReference type="RefSeq" id="NP_216592.1">
    <property type="nucleotide sequence ID" value="NC_000962.3"/>
</dbReference>
<dbReference type="RefSeq" id="WP_003410693.1">
    <property type="nucleotide sequence ID" value="NC_000962.3"/>
</dbReference>
<dbReference type="STRING" id="83332.Rv2076c"/>
<dbReference type="PaxDb" id="83332-Rv2076c"/>
<dbReference type="DNASU" id="887296"/>
<dbReference type="GeneID" id="887296"/>
<dbReference type="KEGG" id="mtu:Rv2076c"/>
<dbReference type="KEGG" id="mtv:RVBD_2076c"/>
<dbReference type="TubercuList" id="Rv2076c"/>
<dbReference type="eggNOG" id="ENOG5031W4G">
    <property type="taxonomic scope" value="Bacteria"/>
</dbReference>
<dbReference type="InParanoid" id="P9WLL3"/>
<dbReference type="OrthoDB" id="9980661at2"/>
<dbReference type="Proteomes" id="UP000001584">
    <property type="component" value="Chromosome"/>
</dbReference>
<dbReference type="GO" id="GO:0005886">
    <property type="term" value="C:plasma membrane"/>
    <property type="evidence" value="ECO:0007669"/>
    <property type="project" value="UniProtKB-SubCell"/>
</dbReference>
<reference key="1">
    <citation type="journal article" date="1998" name="Nature">
        <title>Deciphering the biology of Mycobacterium tuberculosis from the complete genome sequence.</title>
        <authorList>
            <person name="Cole S.T."/>
            <person name="Brosch R."/>
            <person name="Parkhill J."/>
            <person name="Garnier T."/>
            <person name="Churcher C.M."/>
            <person name="Harris D.E."/>
            <person name="Gordon S.V."/>
            <person name="Eiglmeier K."/>
            <person name="Gas S."/>
            <person name="Barry C.E. III"/>
            <person name="Tekaia F."/>
            <person name="Badcock K."/>
            <person name="Basham D."/>
            <person name="Brown D."/>
            <person name="Chillingworth T."/>
            <person name="Connor R."/>
            <person name="Davies R.M."/>
            <person name="Devlin K."/>
            <person name="Feltwell T."/>
            <person name="Gentles S."/>
            <person name="Hamlin N."/>
            <person name="Holroyd S."/>
            <person name="Hornsby T."/>
            <person name="Jagels K."/>
            <person name="Krogh A."/>
            <person name="McLean J."/>
            <person name="Moule S."/>
            <person name="Murphy L.D."/>
            <person name="Oliver S."/>
            <person name="Osborne J."/>
            <person name="Quail M.A."/>
            <person name="Rajandream M.A."/>
            <person name="Rogers J."/>
            <person name="Rutter S."/>
            <person name="Seeger K."/>
            <person name="Skelton S."/>
            <person name="Squares S."/>
            <person name="Squares R."/>
            <person name="Sulston J.E."/>
            <person name="Taylor K."/>
            <person name="Whitehead S."/>
            <person name="Barrell B.G."/>
        </authorList>
    </citation>
    <scope>NUCLEOTIDE SEQUENCE [LARGE SCALE GENOMIC DNA]</scope>
    <source>
        <strain>ATCC 25618 / H37Rv</strain>
    </source>
</reference>
<accession>P9WLL3</accession>
<accession>L0TBA0</accession>
<accession>P64931</accession>
<accession>Q10684</accession>
<feature type="chain" id="PRO_0000103947" description="Uncharacterized protein Rv2076c">
    <location>
        <begin position="1"/>
        <end position="83"/>
    </location>
</feature>
<feature type="transmembrane region" description="Helical" evidence="1">
    <location>
        <begin position="23"/>
        <end position="43"/>
    </location>
</feature>
<feature type="transmembrane region" description="Helical" evidence="1">
    <location>
        <begin position="49"/>
        <end position="69"/>
    </location>
</feature>
<protein>
    <recommendedName>
        <fullName>Uncharacterized protein Rv2076c</fullName>
    </recommendedName>
</protein>
<comment type="subcellular location">
    <subcellularLocation>
        <location evidence="2">Cell membrane</location>
        <topology evidence="2">Multi-pass membrane protein</topology>
    </subcellularLocation>
</comment>
<keyword id="KW-1003">Cell membrane</keyword>
<keyword id="KW-0472">Membrane</keyword>
<keyword id="KW-1185">Reference proteome</keyword>
<keyword id="KW-0812">Transmembrane</keyword>
<keyword id="KW-1133">Transmembrane helix</keyword>